<dbReference type="EC" id="7.1.1.-" evidence="1"/>
<dbReference type="EMBL" id="DQ424856">
    <property type="protein sequence ID" value="ABE47591.1"/>
    <property type="molecule type" value="Genomic_DNA"/>
</dbReference>
<dbReference type="RefSeq" id="YP_567134.1">
    <property type="nucleotide sequence ID" value="NC_007957.1"/>
</dbReference>
<dbReference type="SMR" id="Q0ZIW2"/>
<dbReference type="FunCoup" id="Q0ZIW2">
    <property type="interactions" value="12"/>
</dbReference>
<dbReference type="STRING" id="29760.Q0ZIW2"/>
<dbReference type="PaxDb" id="29760-VIT_06s0004g07410.t01"/>
<dbReference type="GeneID" id="4025072"/>
<dbReference type="KEGG" id="vvi:4025072"/>
<dbReference type="eggNOG" id="KOG2870">
    <property type="taxonomic scope" value="Eukaryota"/>
</dbReference>
<dbReference type="InParanoid" id="Q0ZIW2"/>
<dbReference type="OrthoDB" id="531329at2759"/>
<dbReference type="Proteomes" id="UP000009183">
    <property type="component" value="Chloroplast"/>
</dbReference>
<dbReference type="ExpressionAtlas" id="Q0ZIW2">
    <property type="expression patterns" value="baseline and differential"/>
</dbReference>
<dbReference type="GO" id="GO:0009535">
    <property type="term" value="C:chloroplast thylakoid membrane"/>
    <property type="evidence" value="ECO:0007669"/>
    <property type="project" value="UniProtKB-SubCell"/>
</dbReference>
<dbReference type="GO" id="GO:0051287">
    <property type="term" value="F:NAD binding"/>
    <property type="evidence" value="ECO:0007669"/>
    <property type="project" value="InterPro"/>
</dbReference>
<dbReference type="GO" id="GO:0016655">
    <property type="term" value="F:oxidoreductase activity, acting on NAD(P)H, quinone or similar compound as acceptor"/>
    <property type="evidence" value="ECO:0007669"/>
    <property type="project" value="UniProtKB-UniRule"/>
</dbReference>
<dbReference type="GO" id="GO:0048038">
    <property type="term" value="F:quinone binding"/>
    <property type="evidence" value="ECO:0007669"/>
    <property type="project" value="UniProtKB-KW"/>
</dbReference>
<dbReference type="GO" id="GO:0019684">
    <property type="term" value="P:photosynthesis, light reaction"/>
    <property type="evidence" value="ECO:0007669"/>
    <property type="project" value="UniProtKB-UniRule"/>
</dbReference>
<dbReference type="FunFam" id="1.10.645.10:FF:000003">
    <property type="entry name" value="NAD(P)H-quinone oxidoreductase subunit H, chloroplastic"/>
    <property type="match status" value="1"/>
</dbReference>
<dbReference type="Gene3D" id="1.10.645.10">
    <property type="entry name" value="Cytochrome-c3 Hydrogenase, chain B"/>
    <property type="match status" value="1"/>
</dbReference>
<dbReference type="HAMAP" id="MF_01358">
    <property type="entry name" value="NDH1_NuoD"/>
    <property type="match status" value="1"/>
</dbReference>
<dbReference type="InterPro" id="IPR001135">
    <property type="entry name" value="NADH_Q_OxRdtase_suD"/>
</dbReference>
<dbReference type="InterPro" id="IPR014029">
    <property type="entry name" value="NADH_UbQ_OxRdtase_49kDa_CS"/>
</dbReference>
<dbReference type="InterPro" id="IPR022885">
    <property type="entry name" value="NDH1_su_D/H"/>
</dbReference>
<dbReference type="InterPro" id="IPR029014">
    <property type="entry name" value="NiFe-Hase_large"/>
</dbReference>
<dbReference type="NCBIfam" id="NF004739">
    <property type="entry name" value="PRK06075.1"/>
    <property type="match status" value="1"/>
</dbReference>
<dbReference type="NCBIfam" id="NF005649">
    <property type="entry name" value="PRK07415.1"/>
    <property type="match status" value="1"/>
</dbReference>
<dbReference type="PANTHER" id="PTHR11993:SF10">
    <property type="entry name" value="NADH DEHYDROGENASE [UBIQUINONE] IRON-SULFUR PROTEIN 2, MITOCHONDRIAL"/>
    <property type="match status" value="1"/>
</dbReference>
<dbReference type="PANTHER" id="PTHR11993">
    <property type="entry name" value="NADH-UBIQUINONE OXIDOREDUCTASE 49 KDA SUBUNIT"/>
    <property type="match status" value="1"/>
</dbReference>
<dbReference type="Pfam" id="PF00346">
    <property type="entry name" value="Complex1_49kDa"/>
    <property type="match status" value="1"/>
</dbReference>
<dbReference type="SUPFAM" id="SSF56762">
    <property type="entry name" value="HydB/Nqo4-like"/>
    <property type="match status" value="1"/>
</dbReference>
<dbReference type="PROSITE" id="PS00535">
    <property type="entry name" value="COMPLEX1_49K"/>
    <property type="match status" value="1"/>
</dbReference>
<proteinExistence type="inferred from homology"/>
<accession>Q0ZIW2</accession>
<sequence>MNVPATREDLMIVNMGPHHPSMHGVLRLIVTLDGEDVIDCEPILGYLHRGMEKIAENRTIIQYLPYVTRWDYLATMFTEAITVNAPEQLGNIQVPKRASYIRVIMLELSRIASHLLWLGPFMADIGAQTPFFYIFRERELVYDLFEAATGMRMMHNYFRIGGVAADLPHGWIDKCLDFCDYFLTGVAEYQKLITRNPIFLERVEGVGIIGVEEAINWGLSGPMLRASGIQWDLRKVDHYECYDEFDWEVQWQKEGDSLSRYLVRIGEMVASIKIIQQALEGIPGGPYENLEIRCFDRARDPELNDFEYRFISKKPSPTFELSKQELYVRVEAPKGELGIFLIGDQNVFPWRWKIRPPGFINLQILPQLVKRMKLADIMTILGSIDIIMGEVDR</sequence>
<comment type="function">
    <text evidence="1">NDH shuttles electrons from NAD(P)H:plastoquinone, via FMN and iron-sulfur (Fe-S) centers, to quinones in the photosynthetic chain and possibly in a chloroplast respiratory chain. The immediate electron acceptor for the enzyme in this species is believed to be plastoquinone. Couples the redox reaction to proton translocation, and thus conserves the redox energy in a proton gradient.</text>
</comment>
<comment type="catalytic activity">
    <reaction evidence="1">
        <text>a plastoquinone + NADH + (n+1) H(+)(in) = a plastoquinol + NAD(+) + n H(+)(out)</text>
        <dbReference type="Rhea" id="RHEA:42608"/>
        <dbReference type="Rhea" id="RHEA-COMP:9561"/>
        <dbReference type="Rhea" id="RHEA-COMP:9562"/>
        <dbReference type="ChEBI" id="CHEBI:15378"/>
        <dbReference type="ChEBI" id="CHEBI:17757"/>
        <dbReference type="ChEBI" id="CHEBI:57540"/>
        <dbReference type="ChEBI" id="CHEBI:57945"/>
        <dbReference type="ChEBI" id="CHEBI:62192"/>
    </reaction>
</comment>
<comment type="catalytic activity">
    <reaction evidence="1">
        <text>a plastoquinone + NADPH + (n+1) H(+)(in) = a plastoquinol + NADP(+) + n H(+)(out)</text>
        <dbReference type="Rhea" id="RHEA:42612"/>
        <dbReference type="Rhea" id="RHEA-COMP:9561"/>
        <dbReference type="Rhea" id="RHEA-COMP:9562"/>
        <dbReference type="ChEBI" id="CHEBI:15378"/>
        <dbReference type="ChEBI" id="CHEBI:17757"/>
        <dbReference type="ChEBI" id="CHEBI:57783"/>
        <dbReference type="ChEBI" id="CHEBI:58349"/>
        <dbReference type="ChEBI" id="CHEBI:62192"/>
    </reaction>
</comment>
<comment type="subunit">
    <text evidence="1">NDH is composed of at least 16 different subunits, 5 of which are encoded in the nucleus.</text>
</comment>
<comment type="subcellular location">
    <subcellularLocation>
        <location evidence="1">Plastid</location>
        <location evidence="1">Chloroplast thylakoid membrane</location>
        <topology evidence="1">Peripheral membrane protein</topology>
        <orientation evidence="1">Stromal side</orientation>
    </subcellularLocation>
</comment>
<comment type="similarity">
    <text evidence="1">Belongs to the complex I 49 kDa subunit family.</text>
</comment>
<gene>
    <name evidence="1" type="primary">ndhH</name>
</gene>
<organism>
    <name type="scientific">Vitis vinifera</name>
    <name type="common">Grape</name>
    <dbReference type="NCBI Taxonomy" id="29760"/>
    <lineage>
        <taxon>Eukaryota</taxon>
        <taxon>Viridiplantae</taxon>
        <taxon>Streptophyta</taxon>
        <taxon>Embryophyta</taxon>
        <taxon>Tracheophyta</taxon>
        <taxon>Spermatophyta</taxon>
        <taxon>Magnoliopsida</taxon>
        <taxon>eudicotyledons</taxon>
        <taxon>Gunneridae</taxon>
        <taxon>Pentapetalae</taxon>
        <taxon>rosids</taxon>
        <taxon>Vitales</taxon>
        <taxon>Vitaceae</taxon>
        <taxon>Viteae</taxon>
        <taxon>Vitis</taxon>
    </lineage>
</organism>
<feature type="chain" id="PRO_0000358029" description="NAD(P)H-quinone oxidoreductase subunit H, chloroplastic">
    <location>
        <begin position="1"/>
        <end position="393"/>
    </location>
</feature>
<evidence type="ECO:0000255" key="1">
    <source>
        <dbReference type="HAMAP-Rule" id="MF_01358"/>
    </source>
</evidence>
<keyword id="KW-0150">Chloroplast</keyword>
<keyword id="KW-0472">Membrane</keyword>
<keyword id="KW-0520">NAD</keyword>
<keyword id="KW-0521">NADP</keyword>
<keyword id="KW-0934">Plastid</keyword>
<keyword id="KW-0618">Plastoquinone</keyword>
<keyword id="KW-0874">Quinone</keyword>
<keyword id="KW-1185">Reference proteome</keyword>
<keyword id="KW-0793">Thylakoid</keyword>
<keyword id="KW-1278">Translocase</keyword>
<keyword id="KW-0813">Transport</keyword>
<reference key="1">
    <citation type="journal article" date="2006" name="BMC Evol. Biol.">
        <title>Phylogenetic analyses of Vitis (Vitaceae) based on complete chloroplast genome sequences: effects of taxon sampling and phylogenetic methods on resolving relationships among rosids.</title>
        <authorList>
            <person name="Jansen R.K."/>
            <person name="Kaittanis C."/>
            <person name="Lee S.-B."/>
            <person name="Saski C."/>
            <person name="Tomkins J."/>
            <person name="Alverson A.J."/>
            <person name="Daniell H."/>
        </authorList>
    </citation>
    <scope>NUCLEOTIDE SEQUENCE [LARGE SCALE GENOMIC DNA]</scope>
    <source>
        <strain>cv. Maxxa</strain>
    </source>
</reference>
<name>NDHH_VITVI</name>
<geneLocation type="chloroplast"/>
<protein>
    <recommendedName>
        <fullName evidence="1">NAD(P)H-quinone oxidoreductase subunit H, chloroplastic</fullName>
        <ecNumber evidence="1">7.1.1.-</ecNumber>
    </recommendedName>
    <alternativeName>
        <fullName>NAD(P)H dehydrogenase subunit H</fullName>
    </alternativeName>
    <alternativeName>
        <fullName evidence="1">NADH-plastoquinone oxidoreductase 49 kDa subunit</fullName>
    </alternativeName>
    <alternativeName>
        <fullName evidence="1">NADH-plastoquinone oxidoreductase subunit H</fullName>
    </alternativeName>
</protein>